<comment type="function">
    <text evidence="6">Causes convulsions mice.</text>
</comment>
<comment type="subcellular location">
    <subcellularLocation>
        <location evidence="6">Secreted</location>
    </subcellularLocation>
</comment>
<comment type="tissue specificity">
    <text evidence="10 12">Expressed by the venom duct. Is present in all duct parts with a highest content in part 2 (proximal of the venom bulb) and then decreases in concentration toward the end of the duct.</text>
</comment>
<comment type="domain">
    <text evidence="2">The cysteine framework is VI/VII (C-C-CC-C-C).</text>
</comment>
<comment type="domain">
    <text evidence="1">Displays a mini-granulin fold, a structure composed of two short, stacked beta-hairpins connected by two parallel disulfide bonds. This newly described fold is derived from the same cysteine connectivity as knottins (ICK fold). The name 'mini-granulin fold' comes from the structural homology with the N-terminal region of the human granulin.</text>
</comment>
<comment type="PTM">
    <text evidence="9">The C-terminal amidation is described in Ref.1 and PubMed:23031820, but not in PubMed:22709442 and PubMed:36235146.</text>
</comment>
<comment type="PTM">
    <text evidence="11">Ju et al. (2022) describe a disulfide connectivity (C55-C61; C56-C69; C66-C68) that differs for the usual one.</text>
</comment>
<comment type="miscellaneous">
    <text evidence="5">Shows a very weak inhibition on Nav1.4 and Nav1.8 sodium channels.</text>
</comment>
<dbReference type="PIR" id="A59048">
    <property type="entry name" value="A59048"/>
</dbReference>
<dbReference type="ConoServer" id="1810">
    <property type="toxin name" value="Textile convulsant peptide"/>
</dbReference>
<dbReference type="GO" id="GO:0005576">
    <property type="term" value="C:extracellular region"/>
    <property type="evidence" value="ECO:0007669"/>
    <property type="project" value="UniProtKB-SubCell"/>
</dbReference>
<dbReference type="GO" id="GO:0090729">
    <property type="term" value="F:toxin activity"/>
    <property type="evidence" value="ECO:0007669"/>
    <property type="project" value="UniProtKB-KW"/>
</dbReference>
<name>U6TC_CONTE</name>
<keyword id="KW-0027">Amidation</keyword>
<keyword id="KW-0903">Direct protein sequencing</keyword>
<keyword id="KW-1015">Disulfide bond</keyword>
<keyword id="KW-0528">Neurotoxin</keyword>
<keyword id="KW-0964">Secreted</keyword>
<keyword id="KW-0800">Toxin</keyword>
<accession>P58845</accession>
<protein>
    <recommendedName>
        <fullName evidence="8">Textile convulsant peptide</fullName>
        <shortName evidence="7">TCP</shortName>
    </recommendedName>
</protein>
<proteinExistence type="evidence at protein level"/>
<sequence length="23" mass="2496">NCPYCVVYCCPPAYCEASGCRPP</sequence>
<feature type="peptide" id="PRO_0000044487" description="Textile convulsant peptide" evidence="6">
    <location>
        <begin position="1"/>
        <end position="23"/>
    </location>
</feature>
<feature type="modified residue" description="Proline amide; partial" evidence="3 4 6">
    <location>
        <position position="23"/>
    </location>
</feature>
<feature type="disulfide bond" evidence="2">
    <location>
        <begin position="2"/>
        <end position="10"/>
    </location>
</feature>
<feature type="disulfide bond" evidence="2">
    <location>
        <begin position="5"/>
        <end position="15"/>
    </location>
</feature>
<feature type="disulfide bond" evidence="2">
    <location>
        <begin position="9"/>
        <end position="20"/>
    </location>
</feature>
<evidence type="ECO:0000250" key="1">
    <source>
        <dbReference type="UniProtKB" id="P0DPM3"/>
    </source>
</evidence>
<evidence type="ECO:0000250" key="2">
    <source>
        <dbReference type="UniProtKB" id="Q26443"/>
    </source>
</evidence>
<evidence type="ECO:0000269" key="3">
    <source>
    </source>
</evidence>
<evidence type="ECO:0000269" key="4">
    <source>
    </source>
</evidence>
<evidence type="ECO:0000269" key="5">
    <source>
    </source>
</evidence>
<evidence type="ECO:0000269" key="6">
    <source ref="1"/>
</evidence>
<evidence type="ECO:0000303" key="7">
    <source>
    </source>
</evidence>
<evidence type="ECO:0000303" key="8">
    <source ref="1"/>
</evidence>
<evidence type="ECO:0000305" key="9"/>
<evidence type="ECO:0000305" key="10">
    <source>
    </source>
</evidence>
<evidence type="ECO:0000305" key="11">
    <source>
    </source>
</evidence>
<evidence type="ECO:0000305" key="12">
    <source ref="1"/>
</evidence>
<organism>
    <name type="scientific">Conus textile</name>
    <name type="common">Cloth-of-gold cone</name>
    <dbReference type="NCBI Taxonomy" id="6494"/>
    <lineage>
        <taxon>Eukaryota</taxon>
        <taxon>Metazoa</taxon>
        <taxon>Spiralia</taxon>
        <taxon>Lophotrochozoa</taxon>
        <taxon>Mollusca</taxon>
        <taxon>Gastropoda</taxon>
        <taxon>Caenogastropoda</taxon>
        <taxon>Neogastropoda</taxon>
        <taxon>Conoidea</taxon>
        <taxon>Conidae</taxon>
        <taxon>Conus</taxon>
        <taxon>Cylinder</taxon>
    </lineage>
</organism>
<reference key="1">
    <citation type="journal article" date="1992" name="Biol. Bull.">
        <title>Conus peptides: phylogenetic range of biological activity.</title>
        <authorList>
            <person name="Cruz L.J."/>
            <person name="Ramilo C.A."/>
            <person name="Corpuz G.P."/>
            <person name="Olivera B.M."/>
        </authorList>
    </citation>
    <scope>PROTEIN SEQUENCE</scope>
    <scope>SUBCELLULAR LOCATION</scope>
    <scope>AMIDATION AT PRO-23</scope>
    <scope>BIOASSAY</scope>
    <scope>FUNCTION</scope>
</reference>
<reference key="2">
    <citation type="journal article" date="2012" name="J. Proteome Res.">
        <title>Constrained de novo sequencing of conotoxins.</title>
        <authorList>
            <person name="Bhatia S."/>
            <person name="Kil Y.J."/>
            <person name="Ueberheide B."/>
            <person name="Chait B.T."/>
            <person name="Tayo L."/>
            <person name="Cruz L."/>
            <person name="Lu B."/>
            <person name="Yates J.R. III"/>
            <person name="Bern M."/>
        </authorList>
    </citation>
    <scope>IDENTIFICATION BY MASS SPECTROMETRY</scope>
    <scope>SUBCELLULAR LOCATION</scope>
    <source>
        <tissue>Venom</tissue>
    </source>
</reference>
<reference key="3">
    <citation type="journal article" date="2012" name="Toxicon">
        <title>Secretion and maturation of conotoxins in the venom ducts of Conus textile.</title>
        <authorList>
            <person name="Dobson R."/>
            <person name="Collodoro M."/>
            <person name="Gilles N."/>
            <person name="Turtoi A."/>
            <person name="De Pauw E."/>
            <person name="Quinton L."/>
        </authorList>
    </citation>
    <scope>IDENTIFICATION BY MASS SPECTROMETRY</scope>
    <scope>TISSUE SPECIFICITY</scope>
    <scope>POSITION IN VENOM DUCT</scope>
    <scope>AMIDATION AT PRO-23</scope>
    <source>
        <tissue>Venom</tissue>
    </source>
</reference>
<reference key="4">
    <citation type="journal article" date="2022" name="Molecules">
        <title>Anti-ovarian cancer conotoxins identified from Conus venom.</title>
        <authorList>
            <person name="Ju S."/>
            <person name="Zhang Y."/>
            <person name="Guo X."/>
            <person name="Yan Q."/>
            <person name="Liu S."/>
            <person name="Ma B."/>
            <person name="Zhang M."/>
            <person name="Bao J."/>
            <person name="Luo S."/>
            <person name="Fu Y."/>
        </authorList>
    </citation>
    <scope>PROTEIN SEQUENCE</scope>
    <scope>IDENTIFICATION BY MASS SPECTROMETRY</scope>
    <scope>SUBCELLULAR LOCATION</scope>
    <scope>DISULFIDE BONDS</scope>
    <scope>SYNTHESIS</scope>
    <source>
        <tissue>Venom</tissue>
    </source>
</reference>